<reference key="1">
    <citation type="journal article" date="2003" name="Proc. Natl. Acad. Sci. U.S.A.">
        <title>The complete genome sequence of Mycobacterium bovis.</title>
        <authorList>
            <person name="Garnier T."/>
            <person name="Eiglmeier K."/>
            <person name="Camus J.-C."/>
            <person name="Medina N."/>
            <person name="Mansoor H."/>
            <person name="Pryor M."/>
            <person name="Duthoy S."/>
            <person name="Grondin S."/>
            <person name="Lacroix C."/>
            <person name="Monsempe C."/>
            <person name="Simon S."/>
            <person name="Harris B."/>
            <person name="Atkin R."/>
            <person name="Doggett J."/>
            <person name="Mayes R."/>
            <person name="Keating L."/>
            <person name="Wheeler P.R."/>
            <person name="Parkhill J."/>
            <person name="Barrell B.G."/>
            <person name="Cole S.T."/>
            <person name="Gordon S.V."/>
            <person name="Hewinson R.G."/>
        </authorList>
    </citation>
    <scope>NUCLEOTIDE SEQUENCE [LARGE SCALE GENOMIC DNA]</scope>
    <source>
        <strain>ATCC BAA-935 / AF2122/97</strain>
    </source>
</reference>
<reference key="2">
    <citation type="journal article" date="2017" name="Genome Announc.">
        <title>Updated reference genome sequence and annotation of Mycobacterium bovis AF2122/97.</title>
        <authorList>
            <person name="Malone K.M."/>
            <person name="Farrell D."/>
            <person name="Stuber T.P."/>
            <person name="Schubert O.T."/>
            <person name="Aebersold R."/>
            <person name="Robbe-Austerman S."/>
            <person name="Gordon S.V."/>
        </authorList>
    </citation>
    <scope>NUCLEOTIDE SEQUENCE [LARGE SCALE GENOMIC DNA]</scope>
    <scope>GENOME REANNOTATION</scope>
    <source>
        <strain>ATCC BAA-935 / AF2122/97</strain>
    </source>
</reference>
<name>Y2876_MYCBO</name>
<proteinExistence type="inferred from homology"/>
<organism>
    <name type="scientific">Mycobacterium bovis (strain ATCC BAA-935 / AF2122/97)</name>
    <dbReference type="NCBI Taxonomy" id="233413"/>
    <lineage>
        <taxon>Bacteria</taxon>
        <taxon>Bacillati</taxon>
        <taxon>Actinomycetota</taxon>
        <taxon>Actinomycetes</taxon>
        <taxon>Mycobacteriales</taxon>
        <taxon>Mycobacteriaceae</taxon>
        <taxon>Mycobacterium</taxon>
        <taxon>Mycobacterium tuberculosis complex</taxon>
    </lineage>
</organism>
<comment type="similarity">
    <text evidence="2">Belongs to the UPF0039 (ElaA) family.</text>
</comment>
<protein>
    <recommendedName>
        <fullName>UPF0039 protein Mb2876c</fullName>
    </recommendedName>
</protein>
<evidence type="ECO:0000255" key="1">
    <source>
        <dbReference type="PROSITE-ProRule" id="PRU00532"/>
    </source>
</evidence>
<evidence type="ECO:0000305" key="2"/>
<keyword id="KW-1185">Reference proteome</keyword>
<sequence length="156" mass="17670">MTEALRRVWAKDLDARALYELLKLRVEVFVVEQACPYPELDGRDLLAETRHFWLETPDGEVTCTLRLMEEHAGGEKVFRIGRLCTKRDARGQGHSNRLLCAALAEVGDYPCRIDAQAYLTAMYAQHGFVRDGDEFLDDGIPHVPMLRPGSGQVERP</sequence>
<accession>P67105</accession>
<accession>A0A1R3Y366</accession>
<accession>O05808</accession>
<accession>X2BLR6</accession>
<gene>
    <name type="ordered locus">BQ2027_MB2876C</name>
</gene>
<dbReference type="EMBL" id="LT708304">
    <property type="protein sequence ID" value="SIU01496.1"/>
    <property type="molecule type" value="Genomic_DNA"/>
</dbReference>
<dbReference type="RefSeq" id="NP_856521.1">
    <property type="nucleotide sequence ID" value="NC_002945.3"/>
</dbReference>
<dbReference type="RefSeq" id="WP_003414543.1">
    <property type="nucleotide sequence ID" value="NC_002945.4"/>
</dbReference>
<dbReference type="SMR" id="P67105"/>
<dbReference type="KEGG" id="mbo:BQ2027_MB2876C"/>
<dbReference type="PATRIC" id="fig|233413.5.peg.3154"/>
<dbReference type="Proteomes" id="UP000001419">
    <property type="component" value="Chromosome"/>
</dbReference>
<dbReference type="GO" id="GO:0016747">
    <property type="term" value="F:acyltransferase activity, transferring groups other than amino-acyl groups"/>
    <property type="evidence" value="ECO:0007669"/>
    <property type="project" value="InterPro"/>
</dbReference>
<dbReference type="Gene3D" id="3.40.630.30">
    <property type="match status" value="1"/>
</dbReference>
<dbReference type="InterPro" id="IPR016181">
    <property type="entry name" value="Acyl_CoA_acyltransferase"/>
</dbReference>
<dbReference type="InterPro" id="IPR000182">
    <property type="entry name" value="GNAT_dom"/>
</dbReference>
<dbReference type="Pfam" id="PF13673">
    <property type="entry name" value="Acetyltransf_10"/>
    <property type="match status" value="1"/>
</dbReference>
<dbReference type="SUPFAM" id="SSF55729">
    <property type="entry name" value="Acyl-CoA N-acyltransferases (Nat)"/>
    <property type="match status" value="1"/>
</dbReference>
<dbReference type="PROSITE" id="PS51186">
    <property type="entry name" value="GNAT"/>
    <property type="match status" value="1"/>
</dbReference>
<feature type="chain" id="PRO_0000201922" description="UPF0039 protein Mb2876c">
    <location>
        <begin position="1"/>
        <end position="156"/>
    </location>
</feature>
<feature type="domain" description="N-acetyltransferase" evidence="1">
    <location>
        <begin position="8"/>
        <end position="150"/>
    </location>
</feature>